<organism>
    <name type="scientific">Pseudomonas fluorescens (strain ATCC BAA-477 / NRRL B-23932 / Pf-5)</name>
    <dbReference type="NCBI Taxonomy" id="220664"/>
    <lineage>
        <taxon>Bacteria</taxon>
        <taxon>Pseudomonadati</taxon>
        <taxon>Pseudomonadota</taxon>
        <taxon>Gammaproteobacteria</taxon>
        <taxon>Pseudomonadales</taxon>
        <taxon>Pseudomonadaceae</taxon>
        <taxon>Pseudomonas</taxon>
    </lineage>
</organism>
<feature type="chain" id="PRO_0000229072" description="1-(5-phosphoribosyl)-5-[(5-phosphoribosylamino)methylideneamino] imidazole-4-carboxamide isomerase">
    <location>
        <begin position="1"/>
        <end position="245"/>
    </location>
</feature>
<feature type="active site" description="Proton acceptor" evidence="1">
    <location>
        <position position="8"/>
    </location>
</feature>
<feature type="active site" description="Proton donor" evidence="1">
    <location>
        <position position="130"/>
    </location>
</feature>
<reference key="1">
    <citation type="journal article" date="2005" name="Nat. Biotechnol.">
        <title>Complete genome sequence of the plant commensal Pseudomonas fluorescens Pf-5.</title>
        <authorList>
            <person name="Paulsen I.T."/>
            <person name="Press C.M."/>
            <person name="Ravel J."/>
            <person name="Kobayashi D.Y."/>
            <person name="Myers G.S.A."/>
            <person name="Mavrodi D.V."/>
            <person name="DeBoy R.T."/>
            <person name="Seshadri R."/>
            <person name="Ren Q."/>
            <person name="Madupu R."/>
            <person name="Dodson R.J."/>
            <person name="Durkin A.S."/>
            <person name="Brinkac L.M."/>
            <person name="Daugherty S.C."/>
            <person name="Sullivan S.A."/>
            <person name="Rosovitz M.J."/>
            <person name="Gwinn M.L."/>
            <person name="Zhou L."/>
            <person name="Schneider D.J."/>
            <person name="Cartinhour S.W."/>
            <person name="Nelson W.C."/>
            <person name="Weidman J."/>
            <person name="Watkins K."/>
            <person name="Tran K."/>
            <person name="Khouri H."/>
            <person name="Pierson E.A."/>
            <person name="Pierson L.S. III"/>
            <person name="Thomashow L.S."/>
            <person name="Loper J.E."/>
        </authorList>
    </citation>
    <scope>NUCLEOTIDE SEQUENCE [LARGE SCALE GENOMIC DNA]</scope>
    <source>
        <strain>ATCC BAA-477 / NRRL B-23932 / Pf-5</strain>
    </source>
</reference>
<evidence type="ECO:0000255" key="1">
    <source>
        <dbReference type="HAMAP-Rule" id="MF_01014"/>
    </source>
</evidence>
<gene>
    <name evidence="1" type="primary">hisA</name>
    <name type="ordered locus">PFL_0364</name>
</gene>
<proteinExistence type="inferred from homology"/>
<dbReference type="EC" id="5.3.1.16" evidence="1"/>
<dbReference type="EMBL" id="CP000076">
    <property type="protein sequence ID" value="AAY95773.2"/>
    <property type="molecule type" value="Genomic_DNA"/>
</dbReference>
<dbReference type="RefSeq" id="WP_011058739.1">
    <property type="nucleotide sequence ID" value="NC_004129.6"/>
</dbReference>
<dbReference type="SMR" id="Q4KJS5"/>
<dbReference type="STRING" id="220664.PFL_0364"/>
<dbReference type="GeneID" id="57473353"/>
<dbReference type="KEGG" id="pfl:PFL_0364"/>
<dbReference type="eggNOG" id="COG0106">
    <property type="taxonomic scope" value="Bacteria"/>
</dbReference>
<dbReference type="HOGENOM" id="CLU_048577_1_1_6"/>
<dbReference type="UniPathway" id="UPA00031">
    <property type="reaction ID" value="UER00009"/>
</dbReference>
<dbReference type="Proteomes" id="UP000008540">
    <property type="component" value="Chromosome"/>
</dbReference>
<dbReference type="GO" id="GO:0005737">
    <property type="term" value="C:cytoplasm"/>
    <property type="evidence" value="ECO:0007669"/>
    <property type="project" value="UniProtKB-SubCell"/>
</dbReference>
<dbReference type="GO" id="GO:0003949">
    <property type="term" value="F:1-(5-phosphoribosyl)-5-[(5-phosphoribosylamino)methylideneamino]imidazole-4-carboxamide isomerase activity"/>
    <property type="evidence" value="ECO:0007669"/>
    <property type="project" value="UniProtKB-UniRule"/>
</dbReference>
<dbReference type="GO" id="GO:0000105">
    <property type="term" value="P:L-histidine biosynthetic process"/>
    <property type="evidence" value="ECO:0007669"/>
    <property type="project" value="UniProtKB-UniRule"/>
</dbReference>
<dbReference type="GO" id="GO:0000162">
    <property type="term" value="P:L-tryptophan biosynthetic process"/>
    <property type="evidence" value="ECO:0007669"/>
    <property type="project" value="TreeGrafter"/>
</dbReference>
<dbReference type="CDD" id="cd04732">
    <property type="entry name" value="HisA"/>
    <property type="match status" value="1"/>
</dbReference>
<dbReference type="FunFam" id="3.20.20.70:FF:000009">
    <property type="entry name" value="1-(5-phosphoribosyl)-5-[(5-phosphoribosylamino)methylideneamino] imidazole-4-carboxamide isomerase"/>
    <property type="match status" value="1"/>
</dbReference>
<dbReference type="Gene3D" id="3.20.20.70">
    <property type="entry name" value="Aldolase class I"/>
    <property type="match status" value="1"/>
</dbReference>
<dbReference type="HAMAP" id="MF_01014">
    <property type="entry name" value="HisA"/>
    <property type="match status" value="1"/>
</dbReference>
<dbReference type="InterPro" id="IPR013785">
    <property type="entry name" value="Aldolase_TIM"/>
</dbReference>
<dbReference type="InterPro" id="IPR006062">
    <property type="entry name" value="His_biosynth"/>
</dbReference>
<dbReference type="InterPro" id="IPR006063">
    <property type="entry name" value="HisA_bact_arch"/>
</dbReference>
<dbReference type="InterPro" id="IPR044524">
    <property type="entry name" value="Isoase_HisA-like"/>
</dbReference>
<dbReference type="InterPro" id="IPR023016">
    <property type="entry name" value="Isoase_HisA-like_bact"/>
</dbReference>
<dbReference type="InterPro" id="IPR011060">
    <property type="entry name" value="RibuloseP-bd_barrel"/>
</dbReference>
<dbReference type="NCBIfam" id="TIGR00007">
    <property type="entry name" value="1-(5-phosphoribosyl)-5-[(5-phosphoribosylamino)methylideneamino]imidazole-4-carboxamide isomerase"/>
    <property type="match status" value="1"/>
</dbReference>
<dbReference type="PANTHER" id="PTHR43090">
    <property type="entry name" value="1-(5-PHOSPHORIBOSYL)-5-[(5-PHOSPHORIBOSYLAMINO)METHYLIDENEAMINO] IMIDAZOLE-4-CARBOXAMIDE ISOMERASE"/>
    <property type="match status" value="1"/>
</dbReference>
<dbReference type="PANTHER" id="PTHR43090:SF2">
    <property type="entry name" value="1-(5-PHOSPHORIBOSYL)-5-[(5-PHOSPHORIBOSYLAMINO)METHYLIDENEAMINO] IMIDAZOLE-4-CARBOXAMIDE ISOMERASE"/>
    <property type="match status" value="1"/>
</dbReference>
<dbReference type="Pfam" id="PF00977">
    <property type="entry name" value="His_biosynth"/>
    <property type="match status" value="1"/>
</dbReference>
<dbReference type="SUPFAM" id="SSF51366">
    <property type="entry name" value="Ribulose-phoshate binding barrel"/>
    <property type="match status" value="1"/>
</dbReference>
<comment type="catalytic activity">
    <reaction evidence="1">
        <text>1-(5-phospho-beta-D-ribosyl)-5-[(5-phospho-beta-D-ribosylamino)methylideneamino]imidazole-4-carboxamide = 5-[(5-phospho-1-deoxy-D-ribulos-1-ylimino)methylamino]-1-(5-phospho-beta-D-ribosyl)imidazole-4-carboxamide</text>
        <dbReference type="Rhea" id="RHEA:15469"/>
        <dbReference type="ChEBI" id="CHEBI:58435"/>
        <dbReference type="ChEBI" id="CHEBI:58525"/>
        <dbReference type="EC" id="5.3.1.16"/>
    </reaction>
</comment>
<comment type="pathway">
    <text evidence="1">Amino-acid biosynthesis; L-histidine biosynthesis; L-histidine from 5-phospho-alpha-D-ribose 1-diphosphate: step 4/9.</text>
</comment>
<comment type="subcellular location">
    <subcellularLocation>
        <location evidence="1">Cytoplasm</location>
    </subcellularLocation>
</comment>
<comment type="similarity">
    <text evidence="1">Belongs to the HisA/HisF family.</text>
</comment>
<accession>Q4KJS5</accession>
<name>HIS4_PSEF5</name>
<protein>
    <recommendedName>
        <fullName evidence="1">1-(5-phosphoribosyl)-5-[(5-phosphoribosylamino)methylideneamino] imidazole-4-carboxamide isomerase</fullName>
        <ecNumber evidence="1">5.3.1.16</ecNumber>
    </recommendedName>
    <alternativeName>
        <fullName evidence="1">Phosphoribosylformimino-5-aminoimidazole carboxamide ribotide isomerase</fullName>
    </alternativeName>
</protein>
<sequence>MLIIPAIDLKDGACVRLRQGRMEDSTVFSDDPVSMAAKWVEGGCRRLHLVDLNGAFEGQPVNGEVVTAIAKRYPNLPIQIGGGIRSLETIEHYVKAGVSYVIIGTKAVKEPEFVAEACRAFPGKVIVGLDAKDGFVATDGWAEVSSVQVIDLAKRFEADGVSAIVYTDIAKDGMMQGCNVPFTAALAAATRIPVIASGGIHNLGDIKALLDAKAPGIIGAITGRAIYEGTLDVAEAQAFCDSYQG</sequence>
<keyword id="KW-0028">Amino-acid biosynthesis</keyword>
<keyword id="KW-0963">Cytoplasm</keyword>
<keyword id="KW-0368">Histidine biosynthesis</keyword>
<keyword id="KW-0413">Isomerase</keyword>